<keyword id="KW-0489">Methyltransferase</keyword>
<keyword id="KW-0949">S-adenosyl-L-methionine</keyword>
<keyword id="KW-0808">Transferase</keyword>
<keyword id="KW-0831">Ubiquinone biosynthesis</keyword>
<protein>
    <recommendedName>
        <fullName evidence="1">Ubiquinone biosynthesis O-methyltransferase</fullName>
    </recommendedName>
    <alternativeName>
        <fullName evidence="1">2-polyprenyl-6-hydroxyphenol methylase</fullName>
        <ecNumber evidence="1">2.1.1.222</ecNumber>
    </alternativeName>
    <alternativeName>
        <fullName evidence="1">3-demethylubiquinone 3-O-methyltransferase</fullName>
        <ecNumber evidence="1">2.1.1.64</ecNumber>
    </alternativeName>
</protein>
<reference key="1">
    <citation type="submission" date="2008-01" db="EMBL/GenBank/DDBJ databases">
        <title>Complete sequence of Shewanella halifaxensis HAW-EB4.</title>
        <authorList>
            <consortium name="US DOE Joint Genome Institute"/>
            <person name="Copeland A."/>
            <person name="Lucas S."/>
            <person name="Lapidus A."/>
            <person name="Glavina del Rio T."/>
            <person name="Dalin E."/>
            <person name="Tice H."/>
            <person name="Bruce D."/>
            <person name="Goodwin L."/>
            <person name="Pitluck S."/>
            <person name="Sims D."/>
            <person name="Brettin T."/>
            <person name="Detter J.C."/>
            <person name="Han C."/>
            <person name="Kuske C.R."/>
            <person name="Schmutz J."/>
            <person name="Larimer F."/>
            <person name="Land M."/>
            <person name="Hauser L."/>
            <person name="Kyrpides N."/>
            <person name="Kim E."/>
            <person name="Zhao J.-S."/>
            <person name="Richardson P."/>
        </authorList>
    </citation>
    <scope>NUCLEOTIDE SEQUENCE [LARGE SCALE GENOMIC DNA]</scope>
    <source>
        <strain>HAW-EB4</strain>
    </source>
</reference>
<sequence length="236" mass="26229">MQTHNNVDPQEIAKFEKMAATWWDPEGEFKPLHNLNPLRLNYIDQIAGGIFGKQVLDVGCGGGILSESMAKIGAQVTGLDMGDEPLDVARLHAIETGVLINYVKNTAEAHRDEHRGQYDVVTCMEMLEHVPNPSSVIQACADMVKPGGFVFFSTINRNIRAYVETILGAEYLLKMLPVGTHDHNKFIKPSELIDLADKAELFCSDAVGITYNPITDIFRYTKSLEVNYMIATVKND</sequence>
<gene>
    <name evidence="1" type="primary">ubiG</name>
    <name type="ordered locus">Shal_2038</name>
</gene>
<comment type="function">
    <text evidence="1">O-methyltransferase that catalyzes the 2 O-methylation steps in the ubiquinone biosynthetic pathway.</text>
</comment>
<comment type="catalytic activity">
    <reaction evidence="1">
        <text>a 3-demethylubiquinol + S-adenosyl-L-methionine = a ubiquinol + S-adenosyl-L-homocysteine + H(+)</text>
        <dbReference type="Rhea" id="RHEA:44380"/>
        <dbReference type="Rhea" id="RHEA-COMP:9566"/>
        <dbReference type="Rhea" id="RHEA-COMP:10914"/>
        <dbReference type="ChEBI" id="CHEBI:15378"/>
        <dbReference type="ChEBI" id="CHEBI:17976"/>
        <dbReference type="ChEBI" id="CHEBI:57856"/>
        <dbReference type="ChEBI" id="CHEBI:59789"/>
        <dbReference type="ChEBI" id="CHEBI:84422"/>
        <dbReference type="EC" id="2.1.1.64"/>
    </reaction>
</comment>
<comment type="catalytic activity">
    <reaction evidence="1">
        <text>a 3-(all-trans-polyprenyl)benzene-1,2-diol + S-adenosyl-L-methionine = a 2-methoxy-6-(all-trans-polyprenyl)phenol + S-adenosyl-L-homocysteine + H(+)</text>
        <dbReference type="Rhea" id="RHEA:31411"/>
        <dbReference type="Rhea" id="RHEA-COMP:9550"/>
        <dbReference type="Rhea" id="RHEA-COMP:9551"/>
        <dbReference type="ChEBI" id="CHEBI:15378"/>
        <dbReference type="ChEBI" id="CHEBI:57856"/>
        <dbReference type="ChEBI" id="CHEBI:59789"/>
        <dbReference type="ChEBI" id="CHEBI:62729"/>
        <dbReference type="ChEBI" id="CHEBI:62731"/>
        <dbReference type="EC" id="2.1.1.222"/>
    </reaction>
</comment>
<comment type="pathway">
    <text evidence="1">Cofactor biosynthesis; ubiquinone biosynthesis.</text>
</comment>
<comment type="similarity">
    <text evidence="1">Belongs to the methyltransferase superfamily. UbiG/COQ3 family.</text>
</comment>
<proteinExistence type="inferred from homology"/>
<feature type="chain" id="PRO_1000081226" description="Ubiquinone biosynthesis O-methyltransferase">
    <location>
        <begin position="1"/>
        <end position="236"/>
    </location>
</feature>
<feature type="binding site" evidence="1">
    <location>
        <position position="39"/>
    </location>
    <ligand>
        <name>S-adenosyl-L-methionine</name>
        <dbReference type="ChEBI" id="CHEBI:59789"/>
    </ligand>
</feature>
<feature type="binding site" evidence="1">
    <location>
        <position position="59"/>
    </location>
    <ligand>
        <name>S-adenosyl-L-methionine</name>
        <dbReference type="ChEBI" id="CHEBI:59789"/>
    </ligand>
</feature>
<feature type="binding site" evidence="1">
    <location>
        <position position="80"/>
    </location>
    <ligand>
        <name>S-adenosyl-L-methionine</name>
        <dbReference type="ChEBI" id="CHEBI:59789"/>
    </ligand>
</feature>
<feature type="binding site" evidence="1">
    <location>
        <position position="124"/>
    </location>
    <ligand>
        <name>S-adenosyl-L-methionine</name>
        <dbReference type="ChEBI" id="CHEBI:59789"/>
    </ligand>
</feature>
<name>UBIG_SHEHH</name>
<dbReference type="EC" id="2.1.1.222" evidence="1"/>
<dbReference type="EC" id="2.1.1.64" evidence="1"/>
<dbReference type="EMBL" id="CP000931">
    <property type="protein sequence ID" value="ABZ76599.1"/>
    <property type="molecule type" value="Genomic_DNA"/>
</dbReference>
<dbReference type="RefSeq" id="WP_012277129.1">
    <property type="nucleotide sequence ID" value="NC_010334.1"/>
</dbReference>
<dbReference type="SMR" id="B0TT38"/>
<dbReference type="STRING" id="458817.Shal_2038"/>
<dbReference type="KEGG" id="shl:Shal_2038"/>
<dbReference type="eggNOG" id="COG2227">
    <property type="taxonomic scope" value="Bacteria"/>
</dbReference>
<dbReference type="HOGENOM" id="CLU_042432_5_0_6"/>
<dbReference type="OrthoDB" id="9801538at2"/>
<dbReference type="UniPathway" id="UPA00232"/>
<dbReference type="Proteomes" id="UP000001317">
    <property type="component" value="Chromosome"/>
</dbReference>
<dbReference type="GO" id="GO:0102208">
    <property type="term" value="F:2-polyprenyl-6-hydroxyphenol methylase activity"/>
    <property type="evidence" value="ECO:0007669"/>
    <property type="project" value="UniProtKB-EC"/>
</dbReference>
<dbReference type="GO" id="GO:0061542">
    <property type="term" value="F:3-demethylubiquinol 3-O-methyltransferase activity"/>
    <property type="evidence" value="ECO:0007669"/>
    <property type="project" value="UniProtKB-UniRule"/>
</dbReference>
<dbReference type="GO" id="GO:0010420">
    <property type="term" value="F:polyprenyldihydroxybenzoate methyltransferase activity"/>
    <property type="evidence" value="ECO:0007669"/>
    <property type="project" value="InterPro"/>
</dbReference>
<dbReference type="GO" id="GO:0032259">
    <property type="term" value="P:methylation"/>
    <property type="evidence" value="ECO:0007669"/>
    <property type="project" value="UniProtKB-KW"/>
</dbReference>
<dbReference type="CDD" id="cd02440">
    <property type="entry name" value="AdoMet_MTases"/>
    <property type="match status" value="1"/>
</dbReference>
<dbReference type="FunFam" id="3.40.50.150:FF:000028">
    <property type="entry name" value="Ubiquinone biosynthesis O-methyltransferase"/>
    <property type="match status" value="1"/>
</dbReference>
<dbReference type="Gene3D" id="3.40.50.150">
    <property type="entry name" value="Vaccinia Virus protein VP39"/>
    <property type="match status" value="1"/>
</dbReference>
<dbReference type="HAMAP" id="MF_00472">
    <property type="entry name" value="UbiG"/>
    <property type="match status" value="1"/>
</dbReference>
<dbReference type="InterPro" id="IPR029063">
    <property type="entry name" value="SAM-dependent_MTases_sf"/>
</dbReference>
<dbReference type="InterPro" id="IPR010233">
    <property type="entry name" value="UbiG_MeTrfase"/>
</dbReference>
<dbReference type="NCBIfam" id="TIGR01983">
    <property type="entry name" value="UbiG"/>
    <property type="match status" value="1"/>
</dbReference>
<dbReference type="PANTHER" id="PTHR43464">
    <property type="entry name" value="METHYLTRANSFERASE"/>
    <property type="match status" value="1"/>
</dbReference>
<dbReference type="PANTHER" id="PTHR43464:SF19">
    <property type="entry name" value="UBIQUINONE BIOSYNTHESIS O-METHYLTRANSFERASE, MITOCHONDRIAL"/>
    <property type="match status" value="1"/>
</dbReference>
<dbReference type="Pfam" id="PF13489">
    <property type="entry name" value="Methyltransf_23"/>
    <property type="match status" value="1"/>
</dbReference>
<dbReference type="SUPFAM" id="SSF53335">
    <property type="entry name" value="S-adenosyl-L-methionine-dependent methyltransferases"/>
    <property type="match status" value="1"/>
</dbReference>
<evidence type="ECO:0000255" key="1">
    <source>
        <dbReference type="HAMAP-Rule" id="MF_00472"/>
    </source>
</evidence>
<organism>
    <name type="scientific">Shewanella halifaxensis (strain HAW-EB4)</name>
    <dbReference type="NCBI Taxonomy" id="458817"/>
    <lineage>
        <taxon>Bacteria</taxon>
        <taxon>Pseudomonadati</taxon>
        <taxon>Pseudomonadota</taxon>
        <taxon>Gammaproteobacteria</taxon>
        <taxon>Alteromonadales</taxon>
        <taxon>Shewanellaceae</taxon>
        <taxon>Shewanella</taxon>
    </lineage>
</organism>
<accession>B0TT38</accession>